<name>PLSY_STREM</name>
<feature type="chain" id="PRO_1000136124" description="Glycerol-3-phosphate acyltransferase">
    <location>
        <begin position="1"/>
        <end position="215"/>
    </location>
</feature>
<feature type="transmembrane region" description="Helical" evidence="1">
    <location>
        <begin position="3"/>
        <end position="23"/>
    </location>
</feature>
<feature type="transmembrane region" description="Helical" evidence="1">
    <location>
        <begin position="42"/>
        <end position="61"/>
    </location>
</feature>
<feature type="transmembrane region" description="Helical" evidence="1">
    <location>
        <begin position="68"/>
        <end position="90"/>
    </location>
</feature>
<feature type="transmembrane region" description="Helical" evidence="1">
    <location>
        <begin position="110"/>
        <end position="130"/>
    </location>
</feature>
<feature type="transmembrane region" description="Helical" evidence="1">
    <location>
        <begin position="134"/>
        <end position="154"/>
    </location>
</feature>
<feature type="transmembrane region" description="Helical" evidence="1">
    <location>
        <begin position="162"/>
        <end position="182"/>
    </location>
</feature>
<proteinExistence type="inferred from homology"/>
<sequence length="215" mass="23062">MKLILLILTAYLLGSIPTGLWIGQYFYNINLREHGSGNTGTTNTFRILGLKAGAATLLIDIFKGTLATLLPVLVGASNVSPIAIGFFAVLGHTFPIFAGFKGGKAVATSAGVLLGFAPLYLLFLAAVFVLTLYLFSMISLASLTASVVAVISVLTFPAAHFLLPGYDWLLTITIVVLAAIIILRHQDNMKRIKQQSENLIPWGLNLSKQQPASHH</sequence>
<gene>
    <name evidence="1" type="primary">plsY</name>
    <name type="ordered locus">Sez_1150</name>
</gene>
<evidence type="ECO:0000255" key="1">
    <source>
        <dbReference type="HAMAP-Rule" id="MF_01043"/>
    </source>
</evidence>
<keyword id="KW-1003">Cell membrane</keyword>
<keyword id="KW-0444">Lipid biosynthesis</keyword>
<keyword id="KW-0443">Lipid metabolism</keyword>
<keyword id="KW-0472">Membrane</keyword>
<keyword id="KW-0594">Phospholipid biosynthesis</keyword>
<keyword id="KW-1208">Phospholipid metabolism</keyword>
<keyword id="KW-0808">Transferase</keyword>
<keyword id="KW-0812">Transmembrane</keyword>
<keyword id="KW-1133">Transmembrane helix</keyword>
<reference key="1">
    <citation type="journal article" date="2008" name="PLoS ONE">
        <title>Genome sequence of a lancefield group C Streptococcus zooepidemicus strain causing epidemic nephritis: new information about an old disease.</title>
        <authorList>
            <person name="Beres S.B."/>
            <person name="Sesso R."/>
            <person name="Pinto S.W.L."/>
            <person name="Hoe N.P."/>
            <person name="Porcella S.F."/>
            <person name="Deleo F.R."/>
            <person name="Musser J.M."/>
        </authorList>
    </citation>
    <scope>NUCLEOTIDE SEQUENCE [LARGE SCALE GENOMIC DNA]</scope>
    <source>
        <strain>MGCS10565</strain>
    </source>
</reference>
<comment type="function">
    <text evidence="1">Catalyzes the transfer of an acyl group from acyl-phosphate (acyl-PO(4)) to glycerol-3-phosphate (G3P) to form lysophosphatidic acid (LPA). This enzyme utilizes acyl-phosphate as fatty acyl donor, but not acyl-CoA or acyl-ACP.</text>
</comment>
<comment type="catalytic activity">
    <reaction evidence="1">
        <text>an acyl phosphate + sn-glycerol 3-phosphate = a 1-acyl-sn-glycero-3-phosphate + phosphate</text>
        <dbReference type="Rhea" id="RHEA:34075"/>
        <dbReference type="ChEBI" id="CHEBI:43474"/>
        <dbReference type="ChEBI" id="CHEBI:57597"/>
        <dbReference type="ChEBI" id="CHEBI:57970"/>
        <dbReference type="ChEBI" id="CHEBI:59918"/>
        <dbReference type="EC" id="2.3.1.275"/>
    </reaction>
</comment>
<comment type="pathway">
    <text evidence="1">Lipid metabolism; phospholipid metabolism.</text>
</comment>
<comment type="subunit">
    <text evidence="1">Probably interacts with PlsX.</text>
</comment>
<comment type="subcellular location">
    <subcellularLocation>
        <location evidence="1">Cell membrane</location>
        <topology evidence="1">Multi-pass membrane protein</topology>
    </subcellularLocation>
</comment>
<comment type="similarity">
    <text evidence="1">Belongs to the PlsY family.</text>
</comment>
<accession>B4U3D2</accession>
<dbReference type="EC" id="2.3.1.275" evidence="1"/>
<dbReference type="EMBL" id="CP001129">
    <property type="protein sequence ID" value="ACG62499.1"/>
    <property type="molecule type" value="Genomic_DNA"/>
</dbReference>
<dbReference type="RefSeq" id="WP_012515764.1">
    <property type="nucleotide sequence ID" value="NC_011134.1"/>
</dbReference>
<dbReference type="SMR" id="B4U3D2"/>
<dbReference type="GeneID" id="83705046"/>
<dbReference type="KEGG" id="sez:Sez_1150"/>
<dbReference type="HOGENOM" id="CLU_081254_4_0_9"/>
<dbReference type="UniPathway" id="UPA00085"/>
<dbReference type="Proteomes" id="UP000001873">
    <property type="component" value="Chromosome"/>
</dbReference>
<dbReference type="GO" id="GO:0005886">
    <property type="term" value="C:plasma membrane"/>
    <property type="evidence" value="ECO:0007669"/>
    <property type="project" value="UniProtKB-SubCell"/>
</dbReference>
<dbReference type="GO" id="GO:0043772">
    <property type="term" value="F:acyl-phosphate glycerol-3-phosphate acyltransferase activity"/>
    <property type="evidence" value="ECO:0007669"/>
    <property type="project" value="UniProtKB-UniRule"/>
</dbReference>
<dbReference type="GO" id="GO:0008654">
    <property type="term" value="P:phospholipid biosynthetic process"/>
    <property type="evidence" value="ECO:0007669"/>
    <property type="project" value="UniProtKB-UniRule"/>
</dbReference>
<dbReference type="HAMAP" id="MF_01043">
    <property type="entry name" value="PlsY"/>
    <property type="match status" value="1"/>
</dbReference>
<dbReference type="InterPro" id="IPR003811">
    <property type="entry name" value="G3P_acylTferase_PlsY"/>
</dbReference>
<dbReference type="NCBIfam" id="TIGR00023">
    <property type="entry name" value="glycerol-3-phosphate 1-O-acyltransferase PlsY"/>
    <property type="match status" value="1"/>
</dbReference>
<dbReference type="PANTHER" id="PTHR30309:SF0">
    <property type="entry name" value="GLYCEROL-3-PHOSPHATE ACYLTRANSFERASE-RELATED"/>
    <property type="match status" value="1"/>
</dbReference>
<dbReference type="PANTHER" id="PTHR30309">
    <property type="entry name" value="INNER MEMBRANE PROTEIN YGIH"/>
    <property type="match status" value="1"/>
</dbReference>
<dbReference type="Pfam" id="PF02660">
    <property type="entry name" value="G3P_acyltransf"/>
    <property type="match status" value="1"/>
</dbReference>
<dbReference type="SMART" id="SM01207">
    <property type="entry name" value="G3P_acyltransf"/>
    <property type="match status" value="1"/>
</dbReference>
<protein>
    <recommendedName>
        <fullName evidence="1">Glycerol-3-phosphate acyltransferase</fullName>
    </recommendedName>
    <alternativeName>
        <fullName evidence="1">Acyl-PO4 G3P acyltransferase</fullName>
    </alternativeName>
    <alternativeName>
        <fullName evidence="1">Acyl-phosphate--glycerol-3-phosphate acyltransferase</fullName>
    </alternativeName>
    <alternativeName>
        <fullName evidence="1">G3P acyltransferase</fullName>
        <shortName evidence="1">GPAT</shortName>
        <ecNumber evidence="1">2.3.1.275</ecNumber>
    </alternativeName>
    <alternativeName>
        <fullName evidence="1">Lysophosphatidic acid synthase</fullName>
        <shortName evidence="1">LPA synthase</shortName>
    </alternativeName>
</protein>
<organism>
    <name type="scientific">Streptococcus equi subsp. zooepidemicus (strain MGCS10565)</name>
    <dbReference type="NCBI Taxonomy" id="552526"/>
    <lineage>
        <taxon>Bacteria</taxon>
        <taxon>Bacillati</taxon>
        <taxon>Bacillota</taxon>
        <taxon>Bacilli</taxon>
        <taxon>Lactobacillales</taxon>
        <taxon>Streptococcaceae</taxon>
        <taxon>Streptococcus</taxon>
    </lineage>
</organism>